<sequence>MATKTELSPTARESKNAQDMQVDETLIPRKVPSLCSARYGIALVLHFCNFTTIAQNVIMNITMVAMVNSTSPQSQLNDSSEVLPVDSFGGLSKAPKSLPAKSSILGGQFAIWEKWGPPQERSRLCSIALSGMLLGCFTAILIGGFISETLGWPFVFYIFGGVGCVCCLLWFVVIYDDPVSYPWISTSEKEYIISSLKQQVGSSKQPLPIKAMLRSLPIWSICLGCFSHQWLVSTMVVYIPTYISSVYHVNIRDNGLLSALPFIVAWVIGMVGGYLADFLLTKKFRLITVRKIATILGSLPSSALIVSLPYLNSGYITATALLTLSCGLSTLCQSGIYINVLDIAPRYSSFLMGASRGFSSIAPVIVPTVSGFLLSQDPEFGWRNVFFLLFAVNLLGLLFYLIFGEADVQEWAKERKLTRL</sequence>
<keyword id="KW-0025">Alternative splicing</keyword>
<keyword id="KW-1003">Cell membrane</keyword>
<keyword id="KW-0256">Endoplasmic reticulum</keyword>
<keyword id="KW-0325">Glycoprotein</keyword>
<keyword id="KW-0406">Ion transport</keyword>
<keyword id="KW-0472">Membrane</keyword>
<keyword id="KW-1267">Proteomics identification</keyword>
<keyword id="KW-1185">Reference proteome</keyword>
<keyword id="KW-0915">Sodium</keyword>
<keyword id="KW-0739">Sodium transport</keyword>
<keyword id="KW-0769">Symport</keyword>
<keyword id="KW-0812">Transmembrane</keyword>
<keyword id="KW-1133">Transmembrane helix</keyword>
<keyword id="KW-0813">Transport</keyword>
<accession>O00476</accession>
<accession>B7WNJ5</accession>
<accession>B7Z511</accession>
<accession>Q8WWC7</accession>
<accession>Q9H533</accession>
<gene>
    <name type="primary">SLC17A3</name>
    <name type="synonym">NPT4</name>
</gene>
<feature type="chain" id="PRO_0000351138" description="Sodium-dependent phosphate transport protein 4">
    <location>
        <begin position="1"/>
        <end position="420"/>
    </location>
</feature>
<feature type="transmembrane region" description="Helical" evidence="1">
    <location>
        <begin position="126"/>
        <end position="146"/>
    </location>
</feature>
<feature type="transmembrane region" description="Helical" evidence="1">
    <location>
        <begin position="154"/>
        <end position="174"/>
    </location>
</feature>
<feature type="transmembrane region" description="Helical" evidence="1">
    <location>
        <begin position="218"/>
        <end position="238"/>
    </location>
</feature>
<feature type="transmembrane region" description="Helical" evidence="1">
    <location>
        <begin position="256"/>
        <end position="276"/>
    </location>
</feature>
<feature type="transmembrane region" description="Helical" evidence="1">
    <location>
        <begin position="292"/>
        <end position="314"/>
    </location>
</feature>
<feature type="transmembrane region" description="Helical" evidence="1">
    <location>
        <begin position="319"/>
        <end position="341"/>
    </location>
</feature>
<feature type="transmembrane region" description="Helical" evidence="1">
    <location>
        <begin position="357"/>
        <end position="377"/>
    </location>
</feature>
<feature type="transmembrane region" description="Helical" evidence="1">
    <location>
        <begin position="385"/>
        <end position="405"/>
    </location>
</feature>
<feature type="region of interest" description="Disordered" evidence="2">
    <location>
        <begin position="1"/>
        <end position="21"/>
    </location>
</feature>
<feature type="glycosylation site" description="N-linked (GlcNAc...) asparagine" evidence="1">
    <location>
        <position position="49"/>
    </location>
</feature>
<feature type="glycosylation site" description="N-linked (GlcNAc...) asparagine" evidence="1">
    <location>
        <position position="60"/>
    </location>
</feature>
<feature type="glycosylation site" description="N-linked (GlcNAc...) asparagine" evidence="1">
    <location>
        <position position="68"/>
    </location>
</feature>
<feature type="glycosylation site" description="N-linked (GlcNAc...) asparagine" evidence="1">
    <location>
        <position position="77"/>
    </location>
</feature>
<feature type="splice variant" id="VSP_042888" description="In isoform 2." evidence="7">
    <original>K</original>
    <variation>KAPVYDWSPQIQGIIFGAVGYGGILTMAPSGYLAGRVGTKRVVGISLFATSFLTLCIPLATDFGIVLLIVTRIVQGLSQ</variation>
    <location>
        <position position="101"/>
    </location>
</feature>
<feature type="sequence variant" id="VAR_068680" description="Found in a patient with gout; does not affect isoform 2 localization at the cell membrane; results in reduced urate efflux; dbSNP:rs387907257." evidence="5">
    <original>N</original>
    <variation>H</variation>
    <location>
        <position position="68"/>
    </location>
</feature>
<feature type="sequence variant" id="VAR_024533" description="In dbSNP:rs1165165." evidence="3">
    <original>A</original>
    <variation>T</variation>
    <location>
        <position position="100"/>
    </location>
</feature>
<feature type="sequence variant" id="VAR_034700" description="In dbSNP:rs56027330." evidence="4">
    <original>G</original>
    <variation>R</variation>
    <location>
        <position position="201"/>
    </location>
</feature>
<feature type="sequence variant" id="VAR_068681" description="Found in a patient with hyperuricemia; decreased expression of isoform 2 at the cell membrane; results in highly reduced urate efflux; dbSNP:rs387907256." evidence="5">
    <original>F</original>
    <variation>S</variation>
    <location>
        <position position="226"/>
    </location>
</feature>
<feature type="sequence variant" id="VAR_046633" description="In dbSNP:rs11966370.">
    <original>P</original>
    <variation>L</variation>
    <location>
        <position position="300"/>
    </location>
</feature>
<feature type="sequence conflict" description="In Ref. 1; AAB53423." evidence="9" ref="1">
    <original>V</original>
    <variation>G</variation>
    <location>
        <position position="31"/>
    </location>
</feature>
<feature type="sequence conflict" description="In Ref. 1; AAB53423." evidence="9" ref="1">
    <original>V</original>
    <variation>F</variation>
    <location>
        <position position="179"/>
    </location>
</feature>
<organism>
    <name type="scientific">Homo sapiens</name>
    <name type="common">Human</name>
    <dbReference type="NCBI Taxonomy" id="9606"/>
    <lineage>
        <taxon>Eukaryota</taxon>
        <taxon>Metazoa</taxon>
        <taxon>Chordata</taxon>
        <taxon>Craniata</taxon>
        <taxon>Vertebrata</taxon>
        <taxon>Euteleostomi</taxon>
        <taxon>Mammalia</taxon>
        <taxon>Eutheria</taxon>
        <taxon>Euarchontoglires</taxon>
        <taxon>Primates</taxon>
        <taxon>Haplorrhini</taxon>
        <taxon>Catarrhini</taxon>
        <taxon>Hominidae</taxon>
        <taxon>Homo</taxon>
    </lineage>
</organism>
<evidence type="ECO:0000255" key="1"/>
<evidence type="ECO:0000256" key="2">
    <source>
        <dbReference type="SAM" id="MobiDB-lite"/>
    </source>
</evidence>
<evidence type="ECO:0000269" key="3">
    <source>
    </source>
</evidence>
<evidence type="ECO:0000269" key="4">
    <source>
    </source>
</evidence>
<evidence type="ECO:0000269" key="5">
    <source>
    </source>
</evidence>
<evidence type="ECO:0000269" key="6">
    <source>
    </source>
</evidence>
<evidence type="ECO:0000303" key="7">
    <source>
    </source>
</evidence>
<evidence type="ECO:0000303" key="8">
    <source>
    </source>
</evidence>
<evidence type="ECO:0000305" key="9"/>
<evidence type="ECO:0000305" key="10">
    <source>
    </source>
</evidence>
<protein>
    <recommendedName>
        <fullName>Sodium-dependent phosphate transport protein 4</fullName>
    </recommendedName>
    <alternativeName>
        <fullName>Na(+)/PI cotransporter 4</fullName>
        <shortName evidence="8">NPT4</shortName>
    </alternativeName>
    <alternativeName>
        <fullName>Sodium/phosphate cotransporter 4</fullName>
    </alternativeName>
    <alternativeName>
        <fullName>Solute carrier family 17 member 3</fullName>
    </alternativeName>
</protein>
<reference key="1">
    <citation type="journal article" date="1997" name="Genome Res.">
        <title>A 1.1-Mb transcript map of the hereditary hemochromatosis locus.</title>
        <authorList>
            <person name="Ruddy D.A."/>
            <person name="Kronmal G.S."/>
            <person name="Lee V.K."/>
            <person name="Mintier G.A."/>
            <person name="Quintana L."/>
            <person name="Domingo R. Jr."/>
            <person name="Meyer N.C."/>
            <person name="Irrinki A."/>
            <person name="McClelland E.E."/>
            <person name="Fullan A."/>
            <person name="Mapa F.A."/>
            <person name="Moore T."/>
            <person name="Thomas W."/>
            <person name="Loeb D.B."/>
            <person name="Harmon C."/>
            <person name="Tsuchihashi Z."/>
            <person name="Wolff R.K."/>
            <person name="Schatzman R.C."/>
            <person name="Feder J.N."/>
        </authorList>
    </citation>
    <scope>NUCLEOTIDE SEQUENCE [MRNA] (ISOFORM 1)</scope>
    <scope>TISSUE SPECIFICITY</scope>
</reference>
<reference key="2">
    <citation type="journal article" date="2004" name="Nat. Genet.">
        <title>Complete sequencing and characterization of 21,243 full-length human cDNAs.</title>
        <authorList>
            <person name="Ota T."/>
            <person name="Suzuki Y."/>
            <person name="Nishikawa T."/>
            <person name="Otsuki T."/>
            <person name="Sugiyama T."/>
            <person name="Irie R."/>
            <person name="Wakamatsu A."/>
            <person name="Hayashi K."/>
            <person name="Sato H."/>
            <person name="Nagai K."/>
            <person name="Kimura K."/>
            <person name="Makita H."/>
            <person name="Sekine M."/>
            <person name="Obayashi M."/>
            <person name="Nishi T."/>
            <person name="Shibahara T."/>
            <person name="Tanaka T."/>
            <person name="Ishii S."/>
            <person name="Yamamoto J."/>
            <person name="Saito K."/>
            <person name="Kawai Y."/>
            <person name="Isono Y."/>
            <person name="Nakamura Y."/>
            <person name="Nagahari K."/>
            <person name="Murakami K."/>
            <person name="Yasuda T."/>
            <person name="Iwayanagi T."/>
            <person name="Wagatsuma M."/>
            <person name="Shiratori A."/>
            <person name="Sudo H."/>
            <person name="Hosoiri T."/>
            <person name="Kaku Y."/>
            <person name="Kodaira H."/>
            <person name="Kondo H."/>
            <person name="Sugawara M."/>
            <person name="Takahashi M."/>
            <person name="Kanda K."/>
            <person name="Yokoi T."/>
            <person name="Furuya T."/>
            <person name="Kikkawa E."/>
            <person name="Omura Y."/>
            <person name="Abe K."/>
            <person name="Kamihara K."/>
            <person name="Katsuta N."/>
            <person name="Sato K."/>
            <person name="Tanikawa M."/>
            <person name="Yamazaki M."/>
            <person name="Ninomiya K."/>
            <person name="Ishibashi T."/>
            <person name="Yamashita H."/>
            <person name="Murakawa K."/>
            <person name="Fujimori K."/>
            <person name="Tanai H."/>
            <person name="Kimata M."/>
            <person name="Watanabe M."/>
            <person name="Hiraoka S."/>
            <person name="Chiba Y."/>
            <person name="Ishida S."/>
            <person name="Ono Y."/>
            <person name="Takiguchi S."/>
            <person name="Watanabe S."/>
            <person name="Yosida M."/>
            <person name="Hotuta T."/>
            <person name="Kusano J."/>
            <person name="Kanehori K."/>
            <person name="Takahashi-Fujii A."/>
            <person name="Hara H."/>
            <person name="Tanase T.-O."/>
            <person name="Nomura Y."/>
            <person name="Togiya S."/>
            <person name="Komai F."/>
            <person name="Hara R."/>
            <person name="Takeuchi K."/>
            <person name="Arita M."/>
            <person name="Imose N."/>
            <person name="Musashino K."/>
            <person name="Yuuki H."/>
            <person name="Oshima A."/>
            <person name="Sasaki N."/>
            <person name="Aotsuka S."/>
            <person name="Yoshikawa Y."/>
            <person name="Matsunawa H."/>
            <person name="Ichihara T."/>
            <person name="Shiohata N."/>
            <person name="Sano S."/>
            <person name="Moriya S."/>
            <person name="Momiyama H."/>
            <person name="Satoh N."/>
            <person name="Takami S."/>
            <person name="Terashima Y."/>
            <person name="Suzuki O."/>
            <person name="Nakagawa S."/>
            <person name="Senoh A."/>
            <person name="Mizoguchi H."/>
            <person name="Goto Y."/>
            <person name="Shimizu F."/>
            <person name="Wakebe H."/>
            <person name="Hishigaki H."/>
            <person name="Watanabe T."/>
            <person name="Sugiyama A."/>
            <person name="Takemoto M."/>
            <person name="Kawakami B."/>
            <person name="Yamazaki M."/>
            <person name="Watanabe K."/>
            <person name="Kumagai A."/>
            <person name="Itakura S."/>
            <person name="Fukuzumi Y."/>
            <person name="Fujimori Y."/>
            <person name="Komiyama M."/>
            <person name="Tashiro H."/>
            <person name="Tanigami A."/>
            <person name="Fujiwara T."/>
            <person name="Ono T."/>
            <person name="Yamada K."/>
            <person name="Fujii Y."/>
            <person name="Ozaki K."/>
            <person name="Hirao M."/>
            <person name="Ohmori Y."/>
            <person name="Kawabata A."/>
            <person name="Hikiji T."/>
            <person name="Kobatake N."/>
            <person name="Inagaki H."/>
            <person name="Ikema Y."/>
            <person name="Okamoto S."/>
            <person name="Okitani R."/>
            <person name="Kawakami T."/>
            <person name="Noguchi S."/>
            <person name="Itoh T."/>
            <person name="Shigeta K."/>
            <person name="Senba T."/>
            <person name="Matsumura K."/>
            <person name="Nakajima Y."/>
            <person name="Mizuno T."/>
            <person name="Morinaga M."/>
            <person name="Sasaki M."/>
            <person name="Togashi T."/>
            <person name="Oyama M."/>
            <person name="Hata H."/>
            <person name="Watanabe M."/>
            <person name="Komatsu T."/>
            <person name="Mizushima-Sugano J."/>
            <person name="Satoh T."/>
            <person name="Shirai Y."/>
            <person name="Takahashi Y."/>
            <person name="Nakagawa K."/>
            <person name="Okumura K."/>
            <person name="Nagase T."/>
            <person name="Nomura N."/>
            <person name="Kikuchi H."/>
            <person name="Masuho Y."/>
            <person name="Yamashita R."/>
            <person name="Nakai K."/>
            <person name="Yada T."/>
            <person name="Nakamura Y."/>
            <person name="Ohara O."/>
            <person name="Isogai T."/>
            <person name="Sugano S."/>
        </authorList>
    </citation>
    <scope>NUCLEOTIDE SEQUENCE [LARGE SCALE MRNA] (ISOFORM 2)</scope>
    <source>
        <tissue>Kidney</tissue>
    </source>
</reference>
<reference key="3">
    <citation type="journal article" date="2003" name="Nature">
        <title>The DNA sequence and analysis of human chromosome 6.</title>
        <authorList>
            <person name="Mungall A.J."/>
            <person name="Palmer S.A."/>
            <person name="Sims S.K."/>
            <person name="Edwards C.A."/>
            <person name="Ashurst J.L."/>
            <person name="Wilming L."/>
            <person name="Jones M.C."/>
            <person name="Horton R."/>
            <person name="Hunt S.E."/>
            <person name="Scott C.E."/>
            <person name="Gilbert J.G.R."/>
            <person name="Clamp M.E."/>
            <person name="Bethel G."/>
            <person name="Milne S."/>
            <person name="Ainscough R."/>
            <person name="Almeida J.P."/>
            <person name="Ambrose K.D."/>
            <person name="Andrews T.D."/>
            <person name="Ashwell R.I.S."/>
            <person name="Babbage A.K."/>
            <person name="Bagguley C.L."/>
            <person name="Bailey J."/>
            <person name="Banerjee R."/>
            <person name="Barker D.J."/>
            <person name="Barlow K.F."/>
            <person name="Bates K."/>
            <person name="Beare D.M."/>
            <person name="Beasley H."/>
            <person name="Beasley O."/>
            <person name="Bird C.P."/>
            <person name="Blakey S.E."/>
            <person name="Bray-Allen S."/>
            <person name="Brook J."/>
            <person name="Brown A.J."/>
            <person name="Brown J.Y."/>
            <person name="Burford D.C."/>
            <person name="Burrill W."/>
            <person name="Burton J."/>
            <person name="Carder C."/>
            <person name="Carter N.P."/>
            <person name="Chapman J.C."/>
            <person name="Clark S.Y."/>
            <person name="Clark G."/>
            <person name="Clee C.M."/>
            <person name="Clegg S."/>
            <person name="Cobley V."/>
            <person name="Collier R.E."/>
            <person name="Collins J.E."/>
            <person name="Colman L.K."/>
            <person name="Corby N.R."/>
            <person name="Coville G.J."/>
            <person name="Culley K.M."/>
            <person name="Dhami P."/>
            <person name="Davies J."/>
            <person name="Dunn M."/>
            <person name="Earthrowl M.E."/>
            <person name="Ellington A.E."/>
            <person name="Evans K.A."/>
            <person name="Faulkner L."/>
            <person name="Francis M.D."/>
            <person name="Frankish A."/>
            <person name="Frankland J."/>
            <person name="French L."/>
            <person name="Garner P."/>
            <person name="Garnett J."/>
            <person name="Ghori M.J."/>
            <person name="Gilby L.M."/>
            <person name="Gillson C.J."/>
            <person name="Glithero R.J."/>
            <person name="Grafham D.V."/>
            <person name="Grant M."/>
            <person name="Gribble S."/>
            <person name="Griffiths C."/>
            <person name="Griffiths M.N.D."/>
            <person name="Hall R."/>
            <person name="Halls K.S."/>
            <person name="Hammond S."/>
            <person name="Harley J.L."/>
            <person name="Hart E.A."/>
            <person name="Heath P.D."/>
            <person name="Heathcott R."/>
            <person name="Holmes S.J."/>
            <person name="Howden P.J."/>
            <person name="Howe K.L."/>
            <person name="Howell G.R."/>
            <person name="Huckle E."/>
            <person name="Humphray S.J."/>
            <person name="Humphries M.D."/>
            <person name="Hunt A.R."/>
            <person name="Johnson C.M."/>
            <person name="Joy A.A."/>
            <person name="Kay M."/>
            <person name="Keenan S.J."/>
            <person name="Kimberley A.M."/>
            <person name="King A."/>
            <person name="Laird G.K."/>
            <person name="Langford C."/>
            <person name="Lawlor S."/>
            <person name="Leongamornlert D.A."/>
            <person name="Leversha M."/>
            <person name="Lloyd C.R."/>
            <person name="Lloyd D.M."/>
            <person name="Loveland J.E."/>
            <person name="Lovell J."/>
            <person name="Martin S."/>
            <person name="Mashreghi-Mohammadi M."/>
            <person name="Maslen G.L."/>
            <person name="Matthews L."/>
            <person name="McCann O.T."/>
            <person name="McLaren S.J."/>
            <person name="McLay K."/>
            <person name="McMurray A."/>
            <person name="Moore M.J.F."/>
            <person name="Mullikin J.C."/>
            <person name="Niblett D."/>
            <person name="Nickerson T."/>
            <person name="Novik K.L."/>
            <person name="Oliver K."/>
            <person name="Overton-Larty E.K."/>
            <person name="Parker A."/>
            <person name="Patel R."/>
            <person name="Pearce A.V."/>
            <person name="Peck A.I."/>
            <person name="Phillimore B.J.C.T."/>
            <person name="Phillips S."/>
            <person name="Plumb R.W."/>
            <person name="Porter K.M."/>
            <person name="Ramsey Y."/>
            <person name="Ranby S.A."/>
            <person name="Rice C.M."/>
            <person name="Ross M.T."/>
            <person name="Searle S.M."/>
            <person name="Sehra H.K."/>
            <person name="Sheridan E."/>
            <person name="Skuce C.D."/>
            <person name="Smith S."/>
            <person name="Smith M."/>
            <person name="Spraggon L."/>
            <person name="Squares S.L."/>
            <person name="Steward C.A."/>
            <person name="Sycamore N."/>
            <person name="Tamlyn-Hall G."/>
            <person name="Tester J."/>
            <person name="Theaker A.J."/>
            <person name="Thomas D.W."/>
            <person name="Thorpe A."/>
            <person name="Tracey A."/>
            <person name="Tromans A."/>
            <person name="Tubby B."/>
            <person name="Wall M."/>
            <person name="Wallis J.M."/>
            <person name="West A.P."/>
            <person name="White S.S."/>
            <person name="Whitehead S.L."/>
            <person name="Whittaker H."/>
            <person name="Wild A."/>
            <person name="Willey D.J."/>
            <person name="Wilmer T.E."/>
            <person name="Wood J.M."/>
            <person name="Wray P.W."/>
            <person name="Wyatt J.C."/>
            <person name="Young L."/>
            <person name="Younger R.M."/>
            <person name="Bentley D.R."/>
            <person name="Coulson A."/>
            <person name="Durbin R.M."/>
            <person name="Hubbard T."/>
            <person name="Sulston J.E."/>
            <person name="Dunham I."/>
            <person name="Rogers J."/>
            <person name="Beck S."/>
        </authorList>
    </citation>
    <scope>NUCLEOTIDE SEQUENCE [LARGE SCALE GENOMIC DNA]</scope>
</reference>
<reference key="4">
    <citation type="submission" date="2005-07" db="EMBL/GenBank/DDBJ databases">
        <authorList>
            <person name="Mural R.J."/>
            <person name="Istrail S."/>
            <person name="Sutton G.G."/>
            <person name="Florea L."/>
            <person name="Halpern A.L."/>
            <person name="Mobarry C.M."/>
            <person name="Lippert R."/>
            <person name="Walenz B."/>
            <person name="Shatkay H."/>
            <person name="Dew I."/>
            <person name="Miller J.R."/>
            <person name="Flanigan M.J."/>
            <person name="Edwards N.J."/>
            <person name="Bolanos R."/>
            <person name="Fasulo D."/>
            <person name="Halldorsson B.V."/>
            <person name="Hannenhalli S."/>
            <person name="Turner R."/>
            <person name="Yooseph S."/>
            <person name="Lu F."/>
            <person name="Nusskern D.R."/>
            <person name="Shue B.C."/>
            <person name="Zheng X.H."/>
            <person name="Zhong F."/>
            <person name="Delcher A.L."/>
            <person name="Huson D.H."/>
            <person name="Kravitz S.A."/>
            <person name="Mouchard L."/>
            <person name="Reinert K."/>
            <person name="Remington K.A."/>
            <person name="Clark A.G."/>
            <person name="Waterman M.S."/>
            <person name="Eichler E.E."/>
            <person name="Adams M.D."/>
            <person name="Hunkapiller M.W."/>
            <person name="Myers E.W."/>
            <person name="Venter J.C."/>
        </authorList>
    </citation>
    <scope>NUCLEOTIDE SEQUENCE [LARGE SCALE GENOMIC DNA]</scope>
</reference>
<reference key="5">
    <citation type="journal article" date="2004" name="Genome Res.">
        <title>The status, quality, and expansion of the NIH full-length cDNA project: the Mammalian Gene Collection (MGC).</title>
        <authorList>
            <consortium name="The MGC Project Team"/>
        </authorList>
    </citation>
    <scope>NUCLEOTIDE SEQUENCE [LARGE SCALE MRNA] (ISOFORM 1)</scope>
    <scope>VARIANT THR-100</scope>
    <source>
        <tissue>Kidney</tissue>
    </source>
</reference>
<reference key="6">
    <citation type="journal article" date="2004" name="J. Inherit. Metab. Dis.">
        <title>NPT4, a new microsomal phosphate transporter: mutation analysis in glycogen storage disease type Ic.</title>
        <authorList>
            <person name="Melis D."/>
            <person name="Havelaar A.C."/>
            <person name="Verbeek E."/>
            <person name="Smit G.P.A."/>
            <person name="Benedetti A."/>
            <person name="Mancini G.M.S."/>
            <person name="Verheijen F."/>
        </authorList>
    </citation>
    <scope>SUBCELLULAR LOCATION</scope>
    <scope>VARIANT ARG-201</scope>
</reference>
<reference key="7">
    <citation type="journal article" date="2010" name="J. Biol. Chem.">
        <title>Human sodium phosphate transporter 4 (hNPT4/SLC17A3) as a common renal secretory pathway for drugs and urate.</title>
        <authorList>
            <person name="Jutabha P."/>
            <person name="Anzai N."/>
            <person name="Kitamura K."/>
            <person name="Taniguchi A."/>
            <person name="Kaneko S."/>
            <person name="Yan K."/>
            <person name="Yamada H."/>
            <person name="Shimada H."/>
            <person name="Kimura T."/>
            <person name="Katada T."/>
            <person name="Fukutomi T."/>
            <person name="Tomita K."/>
            <person name="Urano W."/>
            <person name="Yamanaka H."/>
            <person name="Seki G."/>
            <person name="Fujita T."/>
            <person name="Moriyama Y."/>
            <person name="Yamada A."/>
            <person name="Uchida S."/>
            <person name="Wempe M.F."/>
            <person name="Endou H."/>
            <person name="Sakurai H."/>
        </authorList>
    </citation>
    <scope>FUNCTION (ISOFORM 2)</scope>
    <scope>TRANSPORTER ACTIVITY (ISOFORM 2)</scope>
    <scope>TISSUE SPECIFICITY</scope>
    <scope>SUBCELLULAR LOCATION (ISOFORM 2)</scope>
    <scope>POLYMORPHISM</scope>
    <scope>INVOLVEMENT IN UAQTL4</scope>
    <scope>VARIANTS HIS-68 AND SER-226</scope>
    <scope>CHARACTERIZATION OF VARIANTS HIS-68 AND SER-226</scope>
</reference>
<comment type="function">
    <molecule>Isoform 2</molecule>
    <text evidence="5 8">Transports organic anions in a voltage-driven, multispecific, manner, on the apical side of renal proximal tubule (PubMed:20810651). In particular, participates in the secretion of urate from the cell into the lumen (PubMed:20810651). Urate is the end product of purine metabolism (PubMed:20810651). May have roles in the metabolism and secretion of estrone sulfate, estradiol-17-beta-glucuronide, ochratoxin A, as wells as drugs such as bumetanide (PubMed:20810651).</text>
</comment>
<comment type="catalytic activity">
    <molecule>Isoform 2</molecule>
    <reaction evidence="10">
        <text>urate(in) + Na(+)(out) = urate(out) + Na(+)(in)</text>
        <dbReference type="Rhea" id="RHEA:72383"/>
        <dbReference type="ChEBI" id="CHEBI:17775"/>
        <dbReference type="ChEBI" id="CHEBI:29101"/>
    </reaction>
</comment>
<comment type="subcellular location">
    <molecule>Isoform 1</molecule>
    <subcellularLocation>
        <location evidence="4">Endoplasmic reticulum membrane</location>
        <topology evidence="4">Multi-pass membrane protein</topology>
    </subcellularLocation>
</comment>
<comment type="subcellular location">
    <molecule>Isoform 2</molecule>
    <subcellularLocation>
        <location evidence="5">Cell membrane</location>
        <topology evidence="5">Multi-pass membrane protein</topology>
    </subcellularLocation>
</comment>
<comment type="alternative products">
    <event type="alternative splicing"/>
    <isoform>
        <id>O00476-1</id>
        <name>1</name>
        <sequence type="displayed"/>
    </isoform>
    <isoform>
        <id>O00476-2</id>
        <name>2</name>
        <sequence type="described" ref="VSP_042888"/>
    </isoform>
</comment>
<comment type="tissue specificity">
    <text evidence="5 6">Expressed in the liver and kidney (PubMed:20810651, PubMed:9149941). It is detected in proximal tubules in renal cortex as well as some tubules and glomeruli, with highest expression at the apical side of proximal tubules (at protein level) (PubMed:20810651).</text>
</comment>
<comment type="polymorphism">
    <text evidence="5">Genetic variations in SLC17A3 influence the variance in serum uric acid concentrations and define the serum uric acid concentration quantitative trait locus 4 (UAQTL4) [MIM:612671]. Excess serum accumulation of uric acid can lead to the development of gout, a common disorder characterized by tissue deposition of monosodium urate crystals as a consequence of hyperuricemia.</text>
</comment>
<comment type="similarity">
    <text evidence="9">Belongs to the major facilitator superfamily. Sodium/anion cotransporter family.</text>
</comment>
<comment type="sequence caution" evidence="9">
    <conflict type="erroneous initiation">
        <sequence resource="EMBL-CDS" id="AAB53423"/>
    </conflict>
    <text>Truncated N-terminus.</text>
</comment>
<name>NPT4_HUMAN</name>
<dbReference type="EMBL" id="U90545">
    <property type="protein sequence ID" value="AAB53423.1"/>
    <property type="status" value="ALT_INIT"/>
    <property type="molecule type" value="mRNA"/>
</dbReference>
<dbReference type="EMBL" id="AK298271">
    <property type="protein sequence ID" value="BAH12747.1"/>
    <property type="molecule type" value="mRNA"/>
</dbReference>
<dbReference type="EMBL" id="AL138726">
    <property type="status" value="NOT_ANNOTATED_CDS"/>
    <property type="molecule type" value="Genomic_DNA"/>
</dbReference>
<dbReference type="EMBL" id="CH471087">
    <property type="protein sequence ID" value="EAW55495.1"/>
    <property type="molecule type" value="Genomic_DNA"/>
</dbReference>
<dbReference type="EMBL" id="BC017952">
    <property type="protein sequence ID" value="AAH17952.1"/>
    <property type="molecule type" value="mRNA"/>
</dbReference>
<dbReference type="CCDS" id="CCDS4566.2">
    <molecule id="O00476-1"/>
</dbReference>
<dbReference type="CCDS" id="CCDS47385.1">
    <molecule id="O00476-2"/>
</dbReference>
<dbReference type="RefSeq" id="NP_001091956.1">
    <molecule id="O00476-2"/>
    <property type="nucleotide sequence ID" value="NM_001098486.2"/>
</dbReference>
<dbReference type="RefSeq" id="NP_006623.2">
    <molecule id="O00476-1"/>
    <property type="nucleotide sequence ID" value="NM_006632.4"/>
</dbReference>
<dbReference type="SMR" id="O00476"/>
<dbReference type="BioGRID" id="116002">
    <property type="interactions" value="1"/>
</dbReference>
<dbReference type="FunCoup" id="O00476">
    <property type="interactions" value="41"/>
</dbReference>
<dbReference type="STRING" id="9606.ENSP00000380250"/>
<dbReference type="TCDB" id="2.A.1.14.28">
    <property type="family name" value="the major facilitator superfamily (mfs)"/>
</dbReference>
<dbReference type="GlyCosmos" id="O00476">
    <property type="glycosylation" value="4 sites, No reported glycans"/>
</dbReference>
<dbReference type="GlyGen" id="O00476">
    <property type="glycosylation" value="5 sites"/>
</dbReference>
<dbReference type="iPTMnet" id="O00476"/>
<dbReference type="PhosphoSitePlus" id="O00476"/>
<dbReference type="BioMuta" id="SLC17A3"/>
<dbReference type="MassIVE" id="O00476"/>
<dbReference type="PeptideAtlas" id="O00476"/>
<dbReference type="ProteomicsDB" id="47921">
    <molecule id="O00476-1"/>
</dbReference>
<dbReference type="ProteomicsDB" id="47922">
    <molecule id="O00476-2"/>
</dbReference>
<dbReference type="Antibodypedia" id="10761">
    <property type="antibodies" value="67 antibodies from 14 providers"/>
</dbReference>
<dbReference type="DNASU" id="10786"/>
<dbReference type="Ensembl" id="ENST00000360657.7">
    <molecule id="O00476-1"/>
    <property type="protein sequence ID" value="ENSP00000353873.3"/>
    <property type="gene ID" value="ENSG00000124564.17"/>
</dbReference>
<dbReference type="Ensembl" id="ENST00000361703.10">
    <molecule id="O00476-1"/>
    <property type="protein sequence ID" value="ENSP00000355307.6"/>
    <property type="gene ID" value="ENSG00000124564.17"/>
</dbReference>
<dbReference type="Ensembl" id="ENST00000397060.8">
    <molecule id="O00476-2"/>
    <property type="protein sequence ID" value="ENSP00000380250.4"/>
    <property type="gene ID" value="ENSG00000124564.17"/>
</dbReference>
<dbReference type="GeneID" id="10786"/>
<dbReference type="KEGG" id="hsa:10786"/>
<dbReference type="MANE-Select" id="ENST00000397060.8">
    <molecule id="O00476-2"/>
    <property type="protein sequence ID" value="ENSP00000380250.4"/>
    <property type="RefSeq nucleotide sequence ID" value="NM_001098486.2"/>
    <property type="RefSeq protein sequence ID" value="NP_001091956.1"/>
</dbReference>
<dbReference type="UCSC" id="uc003nfi.5">
    <molecule id="O00476-1"/>
    <property type="organism name" value="human"/>
</dbReference>
<dbReference type="AGR" id="HGNC:10931"/>
<dbReference type="CTD" id="10786"/>
<dbReference type="DisGeNET" id="10786"/>
<dbReference type="GeneCards" id="SLC17A3"/>
<dbReference type="HGNC" id="HGNC:10931">
    <property type="gene designation" value="SLC17A3"/>
</dbReference>
<dbReference type="HPA" id="ENSG00000124564">
    <property type="expression patterns" value="Tissue enriched (kidney)"/>
</dbReference>
<dbReference type="MalaCards" id="SLC17A3"/>
<dbReference type="MIM" id="611034">
    <property type="type" value="gene"/>
</dbReference>
<dbReference type="MIM" id="612671">
    <property type="type" value="phenotype"/>
</dbReference>
<dbReference type="neXtProt" id="NX_O00476"/>
<dbReference type="OpenTargets" id="ENSG00000124564"/>
<dbReference type="PharmGKB" id="PA35822"/>
<dbReference type="VEuPathDB" id="HostDB:ENSG00000124564"/>
<dbReference type="eggNOG" id="KOG2532">
    <property type="taxonomic scope" value="Eukaryota"/>
</dbReference>
<dbReference type="GeneTree" id="ENSGT00940000162523"/>
<dbReference type="HOGENOM" id="CLU_001265_5_0_1"/>
<dbReference type="InParanoid" id="O00476"/>
<dbReference type="OMA" id="NFIIMAQ"/>
<dbReference type="OrthoDB" id="2985014at2759"/>
<dbReference type="PAN-GO" id="O00476">
    <property type="GO annotations" value="10 GO annotations based on evolutionary models"/>
</dbReference>
<dbReference type="PhylomeDB" id="O00476"/>
<dbReference type="TreeFam" id="TF313535"/>
<dbReference type="PathwayCommons" id="O00476"/>
<dbReference type="Reactome" id="R-HSA-2672351">
    <property type="pathway name" value="Stimuli-sensing channels"/>
</dbReference>
<dbReference type="BioGRID-ORCS" id="10786">
    <property type="hits" value="6 hits in 1141 CRISPR screens"/>
</dbReference>
<dbReference type="GenomeRNAi" id="10786"/>
<dbReference type="Pharos" id="O00476">
    <property type="development level" value="Tbio"/>
</dbReference>
<dbReference type="PRO" id="PR:O00476"/>
<dbReference type="Proteomes" id="UP000005640">
    <property type="component" value="Chromosome 6"/>
</dbReference>
<dbReference type="RNAct" id="O00476">
    <property type="molecule type" value="protein"/>
</dbReference>
<dbReference type="Bgee" id="ENSG00000124564">
    <property type="expression patterns" value="Expressed in nephron tubule and 87 other cell types or tissues"/>
</dbReference>
<dbReference type="ExpressionAtlas" id="O00476">
    <property type="expression patterns" value="baseline and differential"/>
</dbReference>
<dbReference type="GO" id="GO:0016324">
    <property type="term" value="C:apical plasma membrane"/>
    <property type="evidence" value="ECO:0000314"/>
    <property type="project" value="UniProtKB"/>
</dbReference>
<dbReference type="GO" id="GO:0031526">
    <property type="term" value="C:brush border membrane"/>
    <property type="evidence" value="ECO:0000250"/>
    <property type="project" value="UniProtKB"/>
</dbReference>
<dbReference type="GO" id="GO:0005737">
    <property type="term" value="C:cytoplasm"/>
    <property type="evidence" value="ECO:0000314"/>
    <property type="project" value="UniProtKB"/>
</dbReference>
<dbReference type="GO" id="GO:0005789">
    <property type="term" value="C:endoplasmic reticulum membrane"/>
    <property type="evidence" value="ECO:0000314"/>
    <property type="project" value="UniProtKB"/>
</dbReference>
<dbReference type="GO" id="GO:0048471">
    <property type="term" value="C:perinuclear region of cytoplasm"/>
    <property type="evidence" value="ECO:0000314"/>
    <property type="project" value="UniProtKB"/>
</dbReference>
<dbReference type="GO" id="GO:0005886">
    <property type="term" value="C:plasma membrane"/>
    <property type="evidence" value="ECO:0000314"/>
    <property type="project" value="UniProtKB"/>
</dbReference>
<dbReference type="GO" id="GO:0015562">
    <property type="term" value="F:efflux transmembrane transporter activity"/>
    <property type="evidence" value="ECO:0000314"/>
    <property type="project" value="UniProtKB"/>
</dbReference>
<dbReference type="GO" id="GO:0008514">
    <property type="term" value="F:organic anion transmembrane transporter activity"/>
    <property type="evidence" value="ECO:0000314"/>
    <property type="project" value="UniProtKB"/>
</dbReference>
<dbReference type="GO" id="GO:0005436">
    <property type="term" value="F:sodium:phosphate symporter activity"/>
    <property type="evidence" value="ECO:0000250"/>
    <property type="project" value="UniProtKB"/>
</dbReference>
<dbReference type="GO" id="GO:0019534">
    <property type="term" value="F:toxin transmembrane transporter activity"/>
    <property type="evidence" value="ECO:0000314"/>
    <property type="project" value="UniProtKB"/>
</dbReference>
<dbReference type="GO" id="GO:0015143">
    <property type="term" value="F:urate transmembrane transporter activity"/>
    <property type="evidence" value="ECO:0000314"/>
    <property type="project" value="UniProtKB"/>
</dbReference>
<dbReference type="GO" id="GO:0008308">
    <property type="term" value="F:voltage-gated monoatomic anion channel activity"/>
    <property type="evidence" value="ECO:0000314"/>
    <property type="project" value="UniProtKB"/>
</dbReference>
<dbReference type="GO" id="GO:0042910">
    <property type="term" value="F:xenobiotic transmembrane transporter activity"/>
    <property type="evidence" value="ECO:0000314"/>
    <property type="project" value="UniProtKB"/>
</dbReference>
<dbReference type="GO" id="GO:0015760">
    <property type="term" value="P:glucose-6-phosphate transport"/>
    <property type="evidence" value="ECO:0000304"/>
    <property type="project" value="UniProtKB"/>
</dbReference>
<dbReference type="GO" id="GO:0034220">
    <property type="term" value="P:monoatomic ion transmembrane transport"/>
    <property type="evidence" value="ECO:0000304"/>
    <property type="project" value="Reactome"/>
</dbReference>
<dbReference type="GO" id="GO:0015711">
    <property type="term" value="P:organic anion transport"/>
    <property type="evidence" value="ECO:0000314"/>
    <property type="project" value="UniProtKB"/>
</dbReference>
<dbReference type="GO" id="GO:0006817">
    <property type="term" value="P:phosphate ion transport"/>
    <property type="evidence" value="ECO:0000250"/>
    <property type="project" value="UniProtKB"/>
</dbReference>
<dbReference type="GO" id="GO:0006814">
    <property type="term" value="P:sodium ion transport"/>
    <property type="evidence" value="ECO:0000250"/>
    <property type="project" value="UniProtKB"/>
</dbReference>
<dbReference type="GO" id="GO:0046415">
    <property type="term" value="P:urate metabolic process"/>
    <property type="evidence" value="ECO:0000315"/>
    <property type="project" value="UniProtKB"/>
</dbReference>
<dbReference type="GO" id="GO:0015747">
    <property type="term" value="P:urate transport"/>
    <property type="evidence" value="ECO:0000314"/>
    <property type="project" value="UniProtKB"/>
</dbReference>
<dbReference type="GO" id="GO:1990961">
    <property type="term" value="P:xenobiotic detoxification by transmembrane export across the plasma membrane"/>
    <property type="evidence" value="ECO:0000314"/>
    <property type="project" value="UniProtKB"/>
</dbReference>
<dbReference type="FunFam" id="1.20.1250.20:FF:001045">
    <property type="entry name" value="Solute carrier family 17 (sodium phosphate), member 3"/>
    <property type="match status" value="1"/>
</dbReference>
<dbReference type="FunFam" id="1.20.1250.20:FF:000003">
    <property type="entry name" value="Solute carrier family 17 member 3"/>
    <property type="match status" value="1"/>
</dbReference>
<dbReference type="Gene3D" id="1.20.1250.20">
    <property type="entry name" value="MFS general substrate transporter like domains"/>
    <property type="match status" value="2"/>
</dbReference>
<dbReference type="InterPro" id="IPR011701">
    <property type="entry name" value="MFS"/>
</dbReference>
<dbReference type="InterPro" id="IPR020846">
    <property type="entry name" value="MFS_dom"/>
</dbReference>
<dbReference type="InterPro" id="IPR050382">
    <property type="entry name" value="MFS_Na/Anion_cotransporter"/>
</dbReference>
<dbReference type="InterPro" id="IPR036259">
    <property type="entry name" value="MFS_trans_sf"/>
</dbReference>
<dbReference type="InterPro" id="IPR017373">
    <property type="entry name" value="Na-dep_P-transpt_4_prd"/>
</dbReference>
<dbReference type="PANTHER" id="PTHR11662:SF134">
    <property type="entry name" value="SODIUM-DEPENDENT PHOSPHATE TRANSPORT PROTEIN 4"/>
    <property type="match status" value="1"/>
</dbReference>
<dbReference type="PANTHER" id="PTHR11662">
    <property type="entry name" value="SOLUTE CARRIER FAMILY 17"/>
    <property type="match status" value="1"/>
</dbReference>
<dbReference type="Pfam" id="PF07690">
    <property type="entry name" value="MFS_1"/>
    <property type="match status" value="1"/>
</dbReference>
<dbReference type="PIRSF" id="PIRSF038072">
    <property type="entry name" value="Na(+)/PI_cotransporter4_prd"/>
    <property type="match status" value="1"/>
</dbReference>
<dbReference type="SUPFAM" id="SSF103473">
    <property type="entry name" value="MFS general substrate transporter"/>
    <property type="match status" value="1"/>
</dbReference>
<dbReference type="PROSITE" id="PS50850">
    <property type="entry name" value="MFS"/>
    <property type="match status" value="1"/>
</dbReference>
<proteinExistence type="evidence at protein level"/>